<feature type="chain" id="PRO_0000308656" description="Casparian strip membrane protein 3">
    <location>
        <begin position="1"/>
        <end position="221"/>
    </location>
</feature>
<feature type="topological domain" description="Cytoplasmic" evidence="1">
    <location>
        <begin position="1"/>
        <end position="58"/>
    </location>
</feature>
<feature type="transmembrane region" description="Helical" evidence="1">
    <location>
        <begin position="59"/>
        <end position="79"/>
    </location>
</feature>
<feature type="topological domain" description="Extracellular" evidence="1">
    <location>
        <begin position="80"/>
        <end position="109"/>
    </location>
</feature>
<feature type="transmembrane region" description="Helical" evidence="1">
    <location>
        <begin position="110"/>
        <end position="130"/>
    </location>
</feature>
<feature type="topological domain" description="Cytoplasmic" evidence="1">
    <location>
        <begin position="131"/>
        <end position="148"/>
    </location>
</feature>
<feature type="transmembrane region" description="Helical" evidence="1">
    <location>
        <begin position="149"/>
        <end position="169"/>
    </location>
</feature>
<feature type="topological domain" description="Extracellular" evidence="1">
    <location>
        <begin position="170"/>
        <end position="194"/>
    </location>
</feature>
<feature type="transmembrane region" description="Helical" evidence="1">
    <location>
        <begin position="195"/>
        <end position="215"/>
    </location>
</feature>
<feature type="topological domain" description="Cytoplasmic" evidence="1">
    <location>
        <begin position="216"/>
        <end position="221"/>
    </location>
</feature>
<feature type="region of interest" description="Disordered" evidence="2">
    <location>
        <begin position="1"/>
        <end position="27"/>
    </location>
</feature>
<feature type="compositionally biased region" description="Basic and acidic residues" evidence="2">
    <location>
        <begin position="1"/>
        <end position="12"/>
    </location>
</feature>
<feature type="glycosylation site" description="N-linked (GlcNAc...) asparagine" evidence="1">
    <location>
        <position position="173"/>
    </location>
</feature>
<sequence>MDIEKAGSRREEEEPIVQRPKLDKGKGKAHVFAPPMNYNRIMDKHKQEKMSPAGWKRGVAIFDFVLRLIAAITAMAAAAKMATTEETLPFFTQFLQFQADYTDLPTMSSFVIVNSIVGGYLTLSLPFSIVCILRPLAVPPRLFLILCDTVMMGLTLMAASASAAIVYLAHNGNSSSNWLPVCQQFGDFCQGTSGAVVASFIAATLLMFLVILSAFALKRTT</sequence>
<keyword id="KW-1003">Cell membrane</keyword>
<keyword id="KW-0961">Cell wall biogenesis/degradation</keyword>
<keyword id="KW-0325">Glycoprotein</keyword>
<keyword id="KW-0472">Membrane</keyword>
<keyword id="KW-1185">Reference proteome</keyword>
<keyword id="KW-0812">Transmembrane</keyword>
<keyword id="KW-1133">Transmembrane helix</keyword>
<protein>
    <recommendedName>
        <fullName>Casparian strip membrane protein 3</fullName>
        <shortName>AtCASP3</shortName>
    </recommendedName>
</protein>
<dbReference type="EMBL" id="AC006232">
    <property type="protein sequence ID" value="AAM15182.1"/>
    <property type="molecule type" value="Genomic_DNA"/>
</dbReference>
<dbReference type="EMBL" id="AC006233">
    <property type="protein sequence ID" value="AAD41993.1"/>
    <property type="molecule type" value="Genomic_DNA"/>
</dbReference>
<dbReference type="EMBL" id="CP002685">
    <property type="protein sequence ID" value="AEC07986.1"/>
    <property type="molecule type" value="Genomic_DNA"/>
</dbReference>
<dbReference type="EMBL" id="BT003063">
    <property type="protein sequence ID" value="AAO23628.1"/>
    <property type="molecule type" value="mRNA"/>
</dbReference>
<dbReference type="EMBL" id="AK227595">
    <property type="protein sequence ID" value="BAE99586.1"/>
    <property type="molecule type" value="mRNA"/>
</dbReference>
<dbReference type="PIR" id="B84672">
    <property type="entry name" value="B84672"/>
</dbReference>
<dbReference type="RefSeq" id="NP_180305.1">
    <property type="nucleotide sequence ID" value="NM_128296.4"/>
</dbReference>
<dbReference type="SMR" id="Q9ZQI2"/>
<dbReference type="DIP" id="DIP-59179N"/>
<dbReference type="FunCoup" id="Q9ZQI2">
    <property type="interactions" value="123"/>
</dbReference>
<dbReference type="IntAct" id="Q9ZQI2">
    <property type="interactions" value="4"/>
</dbReference>
<dbReference type="STRING" id="3702.Q9ZQI2"/>
<dbReference type="GlyCosmos" id="Q9ZQI2">
    <property type="glycosylation" value="1 site, No reported glycans"/>
</dbReference>
<dbReference type="GlyGen" id="Q9ZQI2">
    <property type="glycosylation" value="1 site"/>
</dbReference>
<dbReference type="iPTMnet" id="Q9ZQI2"/>
<dbReference type="PaxDb" id="3702-AT2G27370.1"/>
<dbReference type="ProteomicsDB" id="223910"/>
<dbReference type="EnsemblPlants" id="AT2G27370.1">
    <property type="protein sequence ID" value="AT2G27370.1"/>
    <property type="gene ID" value="AT2G27370"/>
</dbReference>
<dbReference type="GeneID" id="817280"/>
<dbReference type="Gramene" id="AT2G27370.1">
    <property type="protein sequence ID" value="AT2G27370.1"/>
    <property type="gene ID" value="AT2G27370"/>
</dbReference>
<dbReference type="KEGG" id="ath:AT2G27370"/>
<dbReference type="Araport" id="AT2G27370"/>
<dbReference type="TAIR" id="AT2G27370">
    <property type="gene designation" value="CASP3"/>
</dbReference>
<dbReference type="eggNOG" id="ENOG502RXQU">
    <property type="taxonomic scope" value="Eukaryota"/>
</dbReference>
<dbReference type="HOGENOM" id="CLU_066104_3_1_1"/>
<dbReference type="InParanoid" id="Q9ZQI2"/>
<dbReference type="OMA" id="MDKHKQE"/>
<dbReference type="OrthoDB" id="753675at2759"/>
<dbReference type="PhylomeDB" id="Q9ZQI2"/>
<dbReference type="PRO" id="PR:Q9ZQI2"/>
<dbReference type="Proteomes" id="UP000006548">
    <property type="component" value="Chromosome 2"/>
</dbReference>
<dbReference type="ExpressionAtlas" id="Q9ZQI2">
    <property type="expression patterns" value="baseline and differential"/>
</dbReference>
<dbReference type="GO" id="GO:0048226">
    <property type="term" value="C:Casparian strip"/>
    <property type="evidence" value="ECO:0000314"/>
    <property type="project" value="UniProtKB"/>
</dbReference>
<dbReference type="GO" id="GO:0005886">
    <property type="term" value="C:plasma membrane"/>
    <property type="evidence" value="ECO:0000314"/>
    <property type="project" value="UniProtKB"/>
</dbReference>
<dbReference type="GO" id="GO:0042803">
    <property type="term" value="F:protein homodimerization activity"/>
    <property type="evidence" value="ECO:0000314"/>
    <property type="project" value="UniProtKB"/>
</dbReference>
<dbReference type="GO" id="GO:0042545">
    <property type="term" value="P:cell wall modification"/>
    <property type="evidence" value="ECO:0000315"/>
    <property type="project" value="UniProtKB"/>
</dbReference>
<dbReference type="GO" id="GO:0007043">
    <property type="term" value="P:cell-cell junction assembly"/>
    <property type="evidence" value="ECO:0000314"/>
    <property type="project" value="UniProtKB"/>
</dbReference>
<dbReference type="GO" id="GO:1902004">
    <property type="term" value="P:positive regulation of amyloid-beta formation"/>
    <property type="evidence" value="ECO:0000250"/>
    <property type="project" value="UniProtKB"/>
</dbReference>
<dbReference type="GO" id="GO:0006508">
    <property type="term" value="P:proteolysis"/>
    <property type="evidence" value="ECO:0000250"/>
    <property type="project" value="UniProtKB"/>
</dbReference>
<dbReference type="GO" id="GO:0031647">
    <property type="term" value="P:regulation of protein stability"/>
    <property type="evidence" value="ECO:0000250"/>
    <property type="project" value="UniProtKB"/>
</dbReference>
<dbReference type="InterPro" id="IPR006459">
    <property type="entry name" value="CASP/CASPL"/>
</dbReference>
<dbReference type="InterPro" id="IPR006702">
    <property type="entry name" value="CASP_dom"/>
</dbReference>
<dbReference type="InterPro" id="IPR044173">
    <property type="entry name" value="CASPL"/>
</dbReference>
<dbReference type="NCBIfam" id="TIGR01569">
    <property type="entry name" value="A_tha_TIGR01569"/>
    <property type="match status" value="1"/>
</dbReference>
<dbReference type="PANTHER" id="PTHR36488:SF11">
    <property type="entry name" value="CASP-LIKE PROTEIN"/>
    <property type="match status" value="1"/>
</dbReference>
<dbReference type="PANTHER" id="PTHR36488">
    <property type="entry name" value="CASP-LIKE PROTEIN 1U1"/>
    <property type="match status" value="1"/>
</dbReference>
<dbReference type="Pfam" id="PF04535">
    <property type="entry name" value="CASP_dom"/>
    <property type="match status" value="1"/>
</dbReference>
<proteinExistence type="evidence at protein level"/>
<gene>
    <name type="primary">CASP3</name>
    <name type="ordered locus">At2g27370</name>
    <name type="ORF">F10A12.5</name>
    <name type="ORF">F12K2.5</name>
</gene>
<name>CASP3_ARATH</name>
<reference key="1">
    <citation type="journal article" date="1999" name="Nature">
        <title>Sequence and analysis of chromosome 2 of the plant Arabidopsis thaliana.</title>
        <authorList>
            <person name="Lin X."/>
            <person name="Kaul S."/>
            <person name="Rounsley S.D."/>
            <person name="Shea T.P."/>
            <person name="Benito M.-I."/>
            <person name="Town C.D."/>
            <person name="Fujii C.Y."/>
            <person name="Mason T.M."/>
            <person name="Bowman C.L."/>
            <person name="Barnstead M.E."/>
            <person name="Feldblyum T.V."/>
            <person name="Buell C.R."/>
            <person name="Ketchum K.A."/>
            <person name="Lee J.J."/>
            <person name="Ronning C.M."/>
            <person name="Koo H.L."/>
            <person name="Moffat K.S."/>
            <person name="Cronin L.A."/>
            <person name="Shen M."/>
            <person name="Pai G."/>
            <person name="Van Aken S."/>
            <person name="Umayam L."/>
            <person name="Tallon L.J."/>
            <person name="Gill J.E."/>
            <person name="Adams M.D."/>
            <person name="Carrera A.J."/>
            <person name="Creasy T.H."/>
            <person name="Goodman H.M."/>
            <person name="Somerville C.R."/>
            <person name="Copenhaver G.P."/>
            <person name="Preuss D."/>
            <person name="Nierman W.C."/>
            <person name="White O."/>
            <person name="Eisen J.A."/>
            <person name="Salzberg S.L."/>
            <person name="Fraser C.M."/>
            <person name="Venter J.C."/>
        </authorList>
    </citation>
    <scope>NUCLEOTIDE SEQUENCE [LARGE SCALE GENOMIC DNA]</scope>
    <source>
        <strain>cv. Columbia</strain>
    </source>
</reference>
<reference key="2">
    <citation type="journal article" date="2017" name="Plant J.">
        <title>Araport11: a complete reannotation of the Arabidopsis thaliana reference genome.</title>
        <authorList>
            <person name="Cheng C.Y."/>
            <person name="Krishnakumar V."/>
            <person name="Chan A.P."/>
            <person name="Thibaud-Nissen F."/>
            <person name="Schobel S."/>
            <person name="Town C.D."/>
        </authorList>
    </citation>
    <scope>GENOME REANNOTATION</scope>
    <source>
        <strain>cv. Columbia</strain>
    </source>
</reference>
<reference key="3">
    <citation type="journal article" date="2003" name="Science">
        <title>Empirical analysis of transcriptional activity in the Arabidopsis genome.</title>
        <authorList>
            <person name="Yamada K."/>
            <person name="Lim J."/>
            <person name="Dale J.M."/>
            <person name="Chen H."/>
            <person name="Shinn P."/>
            <person name="Palm C.J."/>
            <person name="Southwick A.M."/>
            <person name="Wu H.C."/>
            <person name="Kim C.J."/>
            <person name="Nguyen M."/>
            <person name="Pham P.K."/>
            <person name="Cheuk R.F."/>
            <person name="Karlin-Newmann G."/>
            <person name="Liu S.X."/>
            <person name="Lam B."/>
            <person name="Sakano H."/>
            <person name="Wu T."/>
            <person name="Yu G."/>
            <person name="Miranda M."/>
            <person name="Quach H.L."/>
            <person name="Tripp M."/>
            <person name="Chang C.H."/>
            <person name="Lee J.M."/>
            <person name="Toriumi M.J."/>
            <person name="Chan M.M."/>
            <person name="Tang C.C."/>
            <person name="Onodera C.S."/>
            <person name="Deng J.M."/>
            <person name="Akiyama K."/>
            <person name="Ansari Y."/>
            <person name="Arakawa T."/>
            <person name="Banh J."/>
            <person name="Banno F."/>
            <person name="Bowser L."/>
            <person name="Brooks S.Y."/>
            <person name="Carninci P."/>
            <person name="Chao Q."/>
            <person name="Choy N."/>
            <person name="Enju A."/>
            <person name="Goldsmith A.D."/>
            <person name="Gurjal M."/>
            <person name="Hansen N.F."/>
            <person name="Hayashizaki Y."/>
            <person name="Johnson-Hopson C."/>
            <person name="Hsuan V.W."/>
            <person name="Iida K."/>
            <person name="Karnes M."/>
            <person name="Khan S."/>
            <person name="Koesema E."/>
            <person name="Ishida J."/>
            <person name="Jiang P.X."/>
            <person name="Jones T."/>
            <person name="Kawai J."/>
            <person name="Kamiya A."/>
            <person name="Meyers C."/>
            <person name="Nakajima M."/>
            <person name="Narusaka M."/>
            <person name="Seki M."/>
            <person name="Sakurai T."/>
            <person name="Satou M."/>
            <person name="Tamse R."/>
            <person name="Vaysberg M."/>
            <person name="Wallender E.K."/>
            <person name="Wong C."/>
            <person name="Yamamura Y."/>
            <person name="Yuan S."/>
            <person name="Shinozaki K."/>
            <person name="Davis R.W."/>
            <person name="Theologis A."/>
            <person name="Ecker J.R."/>
        </authorList>
    </citation>
    <scope>NUCLEOTIDE SEQUENCE [LARGE SCALE MRNA]</scope>
    <source>
        <strain>cv. Columbia</strain>
    </source>
</reference>
<reference key="4">
    <citation type="submission" date="2006-07" db="EMBL/GenBank/DDBJ databases">
        <title>Large-scale analysis of RIKEN Arabidopsis full-length (RAFL) cDNAs.</title>
        <authorList>
            <person name="Totoki Y."/>
            <person name="Seki M."/>
            <person name="Ishida J."/>
            <person name="Nakajima M."/>
            <person name="Enju A."/>
            <person name="Kamiya A."/>
            <person name="Narusaka M."/>
            <person name="Shin-i T."/>
            <person name="Nakagawa M."/>
            <person name="Sakamoto N."/>
            <person name="Oishi K."/>
            <person name="Kohara Y."/>
            <person name="Kobayashi M."/>
            <person name="Toyoda A."/>
            <person name="Sakaki Y."/>
            <person name="Sakurai T."/>
            <person name="Iida K."/>
            <person name="Akiyama K."/>
            <person name="Satou M."/>
            <person name="Toyoda T."/>
            <person name="Konagaya A."/>
            <person name="Carninci P."/>
            <person name="Kawai J."/>
            <person name="Hayashizaki Y."/>
            <person name="Shinozaki K."/>
        </authorList>
    </citation>
    <scope>NUCLEOTIDE SEQUENCE [LARGE SCALE MRNA]</scope>
    <source>
        <strain>cv. Columbia</strain>
    </source>
</reference>
<reference key="5">
    <citation type="journal article" date="2011" name="Nature">
        <title>A novel protein family directs Casparian strip formation in the endodermis.</title>
        <authorList>
            <person name="Roppolo D."/>
            <person name="De Rybel B."/>
            <person name="Denervaud Tendon V."/>
            <person name="Pfister A."/>
            <person name="Alassimone J."/>
            <person name="Vermeer J.E.M."/>
            <person name="Yamazaki M."/>
            <person name="Stierhof Y.-D."/>
            <person name="Beeckman T."/>
            <person name="Geldner N."/>
        </authorList>
    </citation>
    <scope>FUNCTION</scope>
    <scope>DISRUPTION PHENOTYPE</scope>
    <scope>SUBCELLULAR LOCATION</scope>
    <scope>DIMERIZATION</scope>
    <scope>INTERACTION WITH CASP1; CASP2; CASP4 AND CASP5</scope>
    <source>
        <strain>cv. Columbia</strain>
    </source>
</reference>
<reference key="6">
    <citation type="journal article" date="2014" name="Plant Physiol.">
        <title>Functional and evolutionary analysis of the CASPARIAN STRIP MEMBRANE DOMAIN PROTEIN family.</title>
        <authorList>
            <person name="Roppolo D."/>
            <person name="Boeckmann B."/>
            <person name="Pfister A."/>
            <person name="Boutet E."/>
            <person name="Rubio M.C."/>
            <person name="Denervaud-Tendon V."/>
            <person name="Vermeer J.E."/>
            <person name="Gheyselinck J."/>
            <person name="Xenarios I."/>
            <person name="Geldner N."/>
        </authorList>
    </citation>
    <scope>GENE FAMILY</scope>
    <scope>NOMENCLATURE</scope>
</reference>
<accession>Q9ZQI2</accession>
<comment type="function">
    <text evidence="3">Regulates membrane-cell wall junctions and localized cell wall deposition. Required for establishment of the Casparian strip membrane domain (CSD) and the subsequent formation of Casparian strips, a cell wall modification of the root endodermis that determines an apoplastic barrier between the intraorganismal apoplasm and the extraorganismal apoplasm and prevents lateral diffusion.</text>
</comment>
<comment type="subunit">
    <text evidence="3">Homodimer and heterodimers with other CASP proteins. Interacts with CASP1, CASP2, CASP4 and CASP5.</text>
</comment>
<comment type="interaction">
    <interactant intactId="EBI-15927653">
        <id>Q9ZQI2</id>
    </interactant>
    <interactant intactId="EBI-4451446">
        <id>Q9SIH4</id>
        <label>CASP1</label>
    </interactant>
    <organismsDiffer>false</organismsDiffer>
    <experiments>2</experiments>
</comment>
<comment type="subcellular location">
    <subcellularLocation>
        <location evidence="3">Cell membrane</location>
        <topology evidence="3">Multi-pass membrane protein</topology>
    </subcellularLocation>
    <text>Very restricted localization following a belt shape within the plasma membrane which coincides with the position of the Casparian strip membrane domain.</text>
</comment>
<comment type="disruption phenotype">
    <text evidence="3">Disorganised deposition of Casparian strips.</text>
</comment>
<comment type="similarity">
    <text evidence="4">Belongs to the Casparian strip membrane proteins (CASP) family.</text>
</comment>
<evidence type="ECO:0000255" key="1"/>
<evidence type="ECO:0000256" key="2">
    <source>
        <dbReference type="SAM" id="MobiDB-lite"/>
    </source>
</evidence>
<evidence type="ECO:0000269" key="3">
    <source>
    </source>
</evidence>
<evidence type="ECO:0000305" key="4"/>
<organism>
    <name type="scientific">Arabidopsis thaliana</name>
    <name type="common">Mouse-ear cress</name>
    <dbReference type="NCBI Taxonomy" id="3702"/>
    <lineage>
        <taxon>Eukaryota</taxon>
        <taxon>Viridiplantae</taxon>
        <taxon>Streptophyta</taxon>
        <taxon>Embryophyta</taxon>
        <taxon>Tracheophyta</taxon>
        <taxon>Spermatophyta</taxon>
        <taxon>Magnoliopsida</taxon>
        <taxon>eudicotyledons</taxon>
        <taxon>Gunneridae</taxon>
        <taxon>Pentapetalae</taxon>
        <taxon>rosids</taxon>
        <taxon>malvids</taxon>
        <taxon>Brassicales</taxon>
        <taxon>Brassicaceae</taxon>
        <taxon>Camelineae</taxon>
        <taxon>Arabidopsis</taxon>
    </lineage>
</organism>